<evidence type="ECO:0000256" key="1">
    <source>
        <dbReference type="SAM" id="MobiDB-lite"/>
    </source>
</evidence>
<name>041R_FRG3G</name>
<sequence length="1165" mass="129118">MRVVVNAKALEVPVGMSFTEWTRTLSPGSSPRFLAWNPVRPRTFKDVTDPFWNGKVFDLLGVVNGKDDLLFPASEIQEWLEYAPNVDLAELERIFVATHRHRGMMGFAAAVQDSLVHVDPDSVDVTRVKDGLHKELDEHASKAAATDVRLKRLRSVKPVDGFSDPVLIRTVFSVTVPEFGDRTAYEIVDSAVPTGSCPYISAGPFVKTIPGFKPAPEWPAQTAHAEGAVFFKADAEFPDTKPLKDMYRKYSGAAVVPGDVTYPAVITFDVPQGSRHVPPEDFAARVAESLSLDLRGRPLVEMGRVVSVRLDGMRFRPYVLTDLLVSDPDASHVMQTDELNRAHKIKGTVYAQVCGTGQTVSFQEKTDEDSGEAYISLRVRARDRKGVEELMEAAGRVMAIYSRRESEIVSFYALYDKTVAKEAAPPRPPRKSKAPEPTGDKADRKLLRTLAPDIFLPTYSRKCLHMPVILRGAELEDARKKGLNLMDFPLFGESERLTYACKHPQHPYPGLRANLLPNKAKYPFVPCCYSKDQAVRPNSKWTAYTTGNAEARRQGRIREGVMQAEPLPEGALIFLRRVLGQETGSKFFALRTTGVPETPVNAVHVAVFQRSLTAEEQAEERAAMALDPSAMGACAQELYVEPDVDWDRWRREMGDPNVPFNLLKYFRALETRYDCDIYIMDNKGIIHTKAVRGRLRYRSRRPTVILHLREESCVPVMTPPSDWTRGPVRNGILTFSPIDPITVKLHDLYQDSRPVYVDGVRVPPLRSDWLPCSGQVVDRAGKARVFVVTPTGKMSRGSFTLVTWPMPPLAAPILRTDTGFPRGRSDSPLSFLGSRFVPSGYRRSVETGAIREITGILDGACEACLLTHDPVLVPDPSWSDGGPPVYEDPVPSRALEGFTGAEKKARMLVEYAKKAISIREGSCTQESVRSFAANGGFVVSPGALDGMKVFNPRFEAPGPFAEADWAVKVPDVKTARRLVYALRVASVNGTCPVQEYASASLVPNFYKTSTDFVQSPAYTINVWRNDLDQSAVKKTRRAVVDWERGLAVPWPLPETELGFSYSLRFAGISRTFMAMNHPTWESAAFAALTWAKSGYCPGVTSNQIPEGEKVPTYACVKGMKPAKVLESGDGTLKLDKSSYGDVRVSGVMIYRASEGKPMQYVSLLM</sequence>
<accession>Q6GZT5</accession>
<dbReference type="EMBL" id="AY548484">
    <property type="protein sequence ID" value="AAT09700.1"/>
    <property type="molecule type" value="Genomic_DNA"/>
</dbReference>
<dbReference type="RefSeq" id="YP_031619.1">
    <property type="nucleotide sequence ID" value="NC_005946.1"/>
</dbReference>
<dbReference type="SMR" id="Q6GZT5"/>
<dbReference type="KEGG" id="vg:2947820"/>
<dbReference type="Proteomes" id="UP000008770">
    <property type="component" value="Segment"/>
</dbReference>
<dbReference type="InterPro" id="IPR043920">
    <property type="entry name" value="DUF5757"/>
</dbReference>
<dbReference type="Pfam" id="PF19061">
    <property type="entry name" value="DUF5757"/>
    <property type="match status" value="1"/>
</dbReference>
<organism>
    <name type="scientific">Frog virus 3 (isolate Goorha)</name>
    <name type="common">FV-3</name>
    <dbReference type="NCBI Taxonomy" id="654924"/>
    <lineage>
        <taxon>Viruses</taxon>
        <taxon>Varidnaviria</taxon>
        <taxon>Bamfordvirae</taxon>
        <taxon>Nucleocytoviricota</taxon>
        <taxon>Megaviricetes</taxon>
        <taxon>Pimascovirales</taxon>
        <taxon>Iridoviridae</taxon>
        <taxon>Alphairidovirinae</taxon>
        <taxon>Ranavirus</taxon>
        <taxon>Frog virus 3</taxon>
    </lineage>
</organism>
<organismHost>
    <name type="scientific">Dryophytes versicolor</name>
    <name type="common">chameleon treefrog</name>
    <dbReference type="NCBI Taxonomy" id="30343"/>
</organismHost>
<organismHost>
    <name type="scientific">Lithobates pipiens</name>
    <name type="common">Northern leopard frog</name>
    <name type="synonym">Rana pipiens</name>
    <dbReference type="NCBI Taxonomy" id="8404"/>
</organismHost>
<organismHost>
    <name type="scientific">Lithobates sylvaticus</name>
    <name type="common">Wood frog</name>
    <name type="synonym">Rana sylvatica</name>
    <dbReference type="NCBI Taxonomy" id="45438"/>
</organismHost>
<organismHost>
    <name type="scientific">Notophthalmus viridescens</name>
    <name type="common">Eastern newt</name>
    <name type="synonym">Triturus viridescens</name>
    <dbReference type="NCBI Taxonomy" id="8316"/>
</organismHost>
<proteinExistence type="predicted"/>
<reference key="1">
    <citation type="journal article" date="2004" name="Virology">
        <title>Comparative genomic analyses of frog virus 3, type species of the genus Ranavirus (family Iridoviridae).</title>
        <authorList>
            <person name="Tan W.G."/>
            <person name="Barkman T.J."/>
            <person name="Gregory Chinchar V."/>
            <person name="Essani K."/>
        </authorList>
    </citation>
    <scope>NUCLEOTIDE SEQUENCE [LARGE SCALE GENOMIC DNA]</scope>
</reference>
<keyword id="KW-1185">Reference proteome</keyword>
<gene>
    <name type="ORF">FV3-041R</name>
</gene>
<feature type="chain" id="PRO_0000410549" description="Uncharacterized protein 041R">
    <location>
        <begin position="1"/>
        <end position="1165"/>
    </location>
</feature>
<feature type="region of interest" description="Disordered" evidence="1">
    <location>
        <begin position="422"/>
        <end position="442"/>
    </location>
</feature>
<protein>
    <recommendedName>
        <fullName>Uncharacterized protein 041R</fullName>
    </recommendedName>
</protein>